<reference key="1">
    <citation type="submission" date="2007-04" db="EMBL/GenBank/DDBJ databases">
        <title>Complete sequence of Pseudomonas mendocina ymp.</title>
        <authorList>
            <consortium name="US DOE Joint Genome Institute"/>
            <person name="Copeland A."/>
            <person name="Lucas S."/>
            <person name="Lapidus A."/>
            <person name="Barry K."/>
            <person name="Glavina del Rio T."/>
            <person name="Dalin E."/>
            <person name="Tice H."/>
            <person name="Pitluck S."/>
            <person name="Kiss H."/>
            <person name="Brettin T."/>
            <person name="Detter J.C."/>
            <person name="Bruce D."/>
            <person name="Han C."/>
            <person name="Schmutz J."/>
            <person name="Larimer F."/>
            <person name="Land M."/>
            <person name="Hauser L."/>
            <person name="Kyrpides N."/>
            <person name="Mikhailova N."/>
            <person name="Hersman L."/>
            <person name="Dubois J."/>
            <person name="Maurice P."/>
            <person name="Richardson P."/>
        </authorList>
    </citation>
    <scope>NUCLEOTIDE SEQUENCE [LARGE SCALE GENOMIC DNA]</scope>
    <source>
        <strain>ymp</strain>
    </source>
</reference>
<name>RSMJ_ECTM1</name>
<dbReference type="EC" id="2.1.1.242" evidence="1"/>
<dbReference type="EMBL" id="CP000680">
    <property type="protein sequence ID" value="ABP86105.1"/>
    <property type="status" value="ALT_INIT"/>
    <property type="molecule type" value="Genomic_DNA"/>
</dbReference>
<dbReference type="SMR" id="A4XXN9"/>
<dbReference type="STRING" id="399739.Pmen_3353"/>
<dbReference type="KEGG" id="pmy:Pmen_3353"/>
<dbReference type="PATRIC" id="fig|399739.8.peg.3403"/>
<dbReference type="eggNOG" id="COG0742">
    <property type="taxonomic scope" value="Bacteria"/>
</dbReference>
<dbReference type="HOGENOM" id="CLU_076324_0_1_6"/>
<dbReference type="OrthoDB" id="3191794at2"/>
<dbReference type="GO" id="GO:0005737">
    <property type="term" value="C:cytoplasm"/>
    <property type="evidence" value="ECO:0007669"/>
    <property type="project" value="UniProtKB-SubCell"/>
</dbReference>
<dbReference type="GO" id="GO:0008990">
    <property type="term" value="F:rRNA (guanine-N2-)-methyltransferase activity"/>
    <property type="evidence" value="ECO:0007669"/>
    <property type="project" value="UniProtKB-UniRule"/>
</dbReference>
<dbReference type="CDD" id="cd02440">
    <property type="entry name" value="AdoMet_MTases"/>
    <property type="match status" value="1"/>
</dbReference>
<dbReference type="Gene3D" id="3.40.50.150">
    <property type="entry name" value="Vaccinia Virus protein VP39"/>
    <property type="match status" value="1"/>
</dbReference>
<dbReference type="HAMAP" id="MF_01523">
    <property type="entry name" value="16SrRNA_methyltr_J"/>
    <property type="match status" value="1"/>
</dbReference>
<dbReference type="InterPro" id="IPR007536">
    <property type="entry name" value="16SrRNA_methylTrfase_J"/>
</dbReference>
<dbReference type="InterPro" id="IPR029063">
    <property type="entry name" value="SAM-dependent_MTases_sf"/>
</dbReference>
<dbReference type="PANTHER" id="PTHR36112">
    <property type="entry name" value="RIBOSOMAL RNA SMALL SUBUNIT METHYLTRANSFERASE J"/>
    <property type="match status" value="1"/>
</dbReference>
<dbReference type="PANTHER" id="PTHR36112:SF1">
    <property type="entry name" value="RIBOSOMAL RNA SMALL SUBUNIT METHYLTRANSFERASE J"/>
    <property type="match status" value="1"/>
</dbReference>
<dbReference type="Pfam" id="PF04445">
    <property type="entry name" value="SAM_MT"/>
    <property type="match status" value="1"/>
</dbReference>
<dbReference type="SUPFAM" id="SSF53335">
    <property type="entry name" value="S-adenosyl-L-methionine-dependent methyltransferases"/>
    <property type="match status" value="1"/>
</dbReference>
<organism>
    <name type="scientific">Ectopseudomonas mendocina (strain ymp)</name>
    <name type="common">Pseudomonas mendocina</name>
    <dbReference type="NCBI Taxonomy" id="399739"/>
    <lineage>
        <taxon>Bacteria</taxon>
        <taxon>Pseudomonadati</taxon>
        <taxon>Pseudomonadota</taxon>
        <taxon>Gammaproteobacteria</taxon>
        <taxon>Pseudomonadales</taxon>
        <taxon>Pseudomonadaceae</taxon>
        <taxon>Ectopseudomonas</taxon>
    </lineage>
</organism>
<gene>
    <name evidence="1" type="primary">rsmJ</name>
    <name type="ordered locus">Pmen_3353</name>
</gene>
<proteinExistence type="inferred from homology"/>
<feature type="chain" id="PRO_0000316260" description="Ribosomal RNA small subunit methyltransferase J">
    <location>
        <begin position="1"/>
        <end position="260"/>
    </location>
</feature>
<feature type="binding site" evidence="1">
    <location>
        <begin position="108"/>
        <end position="109"/>
    </location>
    <ligand>
        <name>S-adenosyl-L-methionine</name>
        <dbReference type="ChEBI" id="CHEBI:59789"/>
    </ligand>
</feature>
<feature type="binding site" evidence="1">
    <location>
        <begin position="124"/>
        <end position="125"/>
    </location>
    <ligand>
        <name>S-adenosyl-L-methionine</name>
        <dbReference type="ChEBI" id="CHEBI:59789"/>
    </ligand>
</feature>
<feature type="binding site" evidence="1">
    <location>
        <position position="178"/>
    </location>
    <ligand>
        <name>S-adenosyl-L-methionine</name>
        <dbReference type="ChEBI" id="CHEBI:59789"/>
    </ligand>
</feature>
<evidence type="ECO:0000255" key="1">
    <source>
        <dbReference type="HAMAP-Rule" id="MF_01523"/>
    </source>
</evidence>
<evidence type="ECO:0000305" key="2"/>
<protein>
    <recommendedName>
        <fullName evidence="1">Ribosomal RNA small subunit methyltransferase J</fullName>
        <ecNumber evidence="1">2.1.1.242</ecNumber>
    </recommendedName>
    <alternativeName>
        <fullName evidence="1">16S rRNA m2G1516 methyltransferase</fullName>
    </alternativeName>
    <alternativeName>
        <fullName evidence="1">rRNA (guanine-N(2)-)-methyltransferase</fullName>
    </alternativeName>
</protein>
<keyword id="KW-0963">Cytoplasm</keyword>
<keyword id="KW-0489">Methyltransferase</keyword>
<keyword id="KW-0698">rRNA processing</keyword>
<keyword id="KW-0949">S-adenosyl-L-methionine</keyword>
<keyword id="KW-0808">Transferase</keyword>
<comment type="function">
    <text evidence="1">Specifically methylates the guanosine in position 1516 of 16S rRNA.</text>
</comment>
<comment type="catalytic activity">
    <reaction evidence="1">
        <text>guanosine(1516) in 16S rRNA + S-adenosyl-L-methionine = N(2)-methylguanosine(1516) in 16S rRNA + S-adenosyl-L-homocysteine + H(+)</text>
        <dbReference type="Rhea" id="RHEA:43220"/>
        <dbReference type="Rhea" id="RHEA-COMP:10412"/>
        <dbReference type="Rhea" id="RHEA-COMP:10413"/>
        <dbReference type="ChEBI" id="CHEBI:15378"/>
        <dbReference type="ChEBI" id="CHEBI:57856"/>
        <dbReference type="ChEBI" id="CHEBI:59789"/>
        <dbReference type="ChEBI" id="CHEBI:74269"/>
        <dbReference type="ChEBI" id="CHEBI:74481"/>
        <dbReference type="EC" id="2.1.1.242"/>
    </reaction>
</comment>
<comment type="subcellular location">
    <subcellularLocation>
        <location evidence="1">Cytoplasm</location>
    </subcellularLocation>
</comment>
<comment type="similarity">
    <text evidence="1">Belongs to the methyltransferase superfamily. RsmJ family.</text>
</comment>
<comment type="sequence caution" evidence="2">
    <conflict type="erroneous initiation">
        <sequence resource="EMBL-CDS" id="ABP86105"/>
    </conflict>
    <text>Extended N-terminus.</text>
</comment>
<sequence>MTDEPRNASIRMDALQAHHAEAAARWATRLGLPRVGETDFALQLGDQGLQLVELGDKAPGPVRVDFVEGAAAHRRQFGGGSGQMIAKAVGVQSGIRPRILDATAGLGRDAFVLASLGCEMTLIERQPLIAALLEDGLQRAELDLEVAPIAARMRLLTGNAIDLMQNWQGEAPQVIYLDPMFPHRDKSALVKKEMRLFRPFVGDDLDAPALLAAALALASHRVVVKRPRKAPAIEGTKPGYVLEGKSSRYDVYPKKKLEGA</sequence>
<accession>A4XXN9</accession>